<dbReference type="EC" id="4.2.1.49"/>
<dbReference type="EMBL" id="AAFI02000022">
    <property type="protein sequence ID" value="EAL68537.2"/>
    <property type="molecule type" value="Genomic_DNA"/>
</dbReference>
<dbReference type="RefSeq" id="XP_642464.2">
    <property type="nucleotide sequence ID" value="XM_637372.3"/>
</dbReference>
<dbReference type="SMR" id="Q86AX3"/>
<dbReference type="FunCoup" id="Q86AX3">
    <property type="interactions" value="4"/>
</dbReference>
<dbReference type="STRING" id="44689.Q86AX3"/>
<dbReference type="PaxDb" id="44689-DDB0234152"/>
<dbReference type="GeneID" id="8621175"/>
<dbReference type="KEGG" id="ddi:DDB_G0277727"/>
<dbReference type="dictyBase" id="DDB_G0277727">
    <property type="gene designation" value="uroc1"/>
</dbReference>
<dbReference type="VEuPathDB" id="AmoebaDB:DDB_G0277727"/>
<dbReference type="eggNOG" id="ENOG502QR75">
    <property type="taxonomic scope" value="Eukaryota"/>
</dbReference>
<dbReference type="HOGENOM" id="CLU_018868_3_0_1"/>
<dbReference type="InParanoid" id="Q86AX3"/>
<dbReference type="OMA" id="VHFQGLP"/>
<dbReference type="PhylomeDB" id="Q86AX3"/>
<dbReference type="Reactome" id="R-DDI-70921">
    <property type="pathway name" value="Histidine catabolism"/>
</dbReference>
<dbReference type="UniPathway" id="UPA00379">
    <property type="reaction ID" value="UER00550"/>
</dbReference>
<dbReference type="PRO" id="PR:Q86AX3"/>
<dbReference type="Proteomes" id="UP000002195">
    <property type="component" value="Chromosome 2"/>
</dbReference>
<dbReference type="GO" id="GO:0016153">
    <property type="term" value="F:urocanate hydratase activity"/>
    <property type="evidence" value="ECO:0000318"/>
    <property type="project" value="GO_Central"/>
</dbReference>
<dbReference type="GO" id="GO:0006548">
    <property type="term" value="P:L-histidine catabolic process"/>
    <property type="evidence" value="ECO:0000318"/>
    <property type="project" value="GO_Central"/>
</dbReference>
<dbReference type="GO" id="GO:0019556">
    <property type="term" value="P:L-histidine catabolic process to glutamate and formamide"/>
    <property type="evidence" value="ECO:0007669"/>
    <property type="project" value="UniProtKB-UniPathway"/>
</dbReference>
<dbReference type="GO" id="GO:0019557">
    <property type="term" value="P:L-histidine catabolic process to glutamate and formate"/>
    <property type="evidence" value="ECO:0007669"/>
    <property type="project" value="UniProtKB-UniPathway"/>
</dbReference>
<dbReference type="FunFam" id="3.40.1770.10:FF:000002">
    <property type="entry name" value="Urocanate hydratase 1"/>
    <property type="match status" value="1"/>
</dbReference>
<dbReference type="FunFam" id="3.40.1770.10:FF:000003">
    <property type="entry name" value="Urocanate hydratase 1"/>
    <property type="match status" value="1"/>
</dbReference>
<dbReference type="FunFam" id="3.40.50.10730:FF:000002">
    <property type="entry name" value="Urocanate hydratase 1"/>
    <property type="match status" value="1"/>
</dbReference>
<dbReference type="Gene3D" id="3.40.50.10730">
    <property type="entry name" value="Urocanase like domains"/>
    <property type="match status" value="1"/>
</dbReference>
<dbReference type="Gene3D" id="3.40.1770.10">
    <property type="entry name" value="Urocanase superfamily"/>
    <property type="match status" value="2"/>
</dbReference>
<dbReference type="HAMAP" id="MF_00577">
    <property type="entry name" value="HutU"/>
    <property type="match status" value="1"/>
</dbReference>
<dbReference type="InterPro" id="IPR055351">
    <property type="entry name" value="Urocanase"/>
</dbReference>
<dbReference type="InterPro" id="IPR023637">
    <property type="entry name" value="Urocanase-like"/>
</dbReference>
<dbReference type="InterPro" id="IPR035401">
    <property type="entry name" value="Urocanase_C"/>
</dbReference>
<dbReference type="InterPro" id="IPR038364">
    <property type="entry name" value="Urocanase_central_sf"/>
</dbReference>
<dbReference type="InterPro" id="IPR035400">
    <property type="entry name" value="Urocanase_N"/>
</dbReference>
<dbReference type="InterPro" id="IPR035085">
    <property type="entry name" value="Urocanase_Rossmann-like"/>
</dbReference>
<dbReference type="InterPro" id="IPR036190">
    <property type="entry name" value="Urocanase_sf"/>
</dbReference>
<dbReference type="NCBIfam" id="NF003820">
    <property type="entry name" value="PRK05414.1"/>
    <property type="match status" value="1"/>
</dbReference>
<dbReference type="PANTHER" id="PTHR12216">
    <property type="entry name" value="UROCANATE HYDRATASE"/>
    <property type="match status" value="1"/>
</dbReference>
<dbReference type="PANTHER" id="PTHR12216:SF3">
    <property type="entry name" value="UROCANATE HYDRATASE"/>
    <property type="match status" value="1"/>
</dbReference>
<dbReference type="Pfam" id="PF01175">
    <property type="entry name" value="Urocanase"/>
    <property type="match status" value="1"/>
</dbReference>
<dbReference type="Pfam" id="PF17392">
    <property type="entry name" value="Urocanase_C"/>
    <property type="match status" value="1"/>
</dbReference>
<dbReference type="Pfam" id="PF17391">
    <property type="entry name" value="Urocanase_N"/>
    <property type="match status" value="1"/>
</dbReference>
<dbReference type="PIRSF" id="PIRSF001423">
    <property type="entry name" value="Urocanate_hydrat"/>
    <property type="match status" value="1"/>
</dbReference>
<dbReference type="SUPFAM" id="SSF111326">
    <property type="entry name" value="Urocanase"/>
    <property type="match status" value="1"/>
</dbReference>
<evidence type="ECO:0000250" key="1"/>
<evidence type="ECO:0000250" key="2">
    <source>
        <dbReference type="UniProtKB" id="P25503"/>
    </source>
</evidence>
<evidence type="ECO:0000305" key="3"/>
<name>HUTU_DICDI</name>
<protein>
    <recommendedName>
        <fullName>Probable urocanate hydratase</fullName>
        <shortName>Urocanase</shortName>
        <ecNumber>4.2.1.49</ecNumber>
    </recommendedName>
    <alternativeName>
        <fullName>Imidazolonepropionate hydrolase</fullName>
    </alternativeName>
</protein>
<reference key="1">
    <citation type="journal article" date="2002" name="Nature">
        <title>Sequence and analysis of chromosome 2 of Dictyostelium discoideum.</title>
        <authorList>
            <person name="Gloeckner G."/>
            <person name="Eichinger L."/>
            <person name="Szafranski K."/>
            <person name="Pachebat J.A."/>
            <person name="Bankier A.T."/>
            <person name="Dear P.H."/>
            <person name="Lehmann R."/>
            <person name="Baumgart C."/>
            <person name="Parra G."/>
            <person name="Abril J.F."/>
            <person name="Guigo R."/>
            <person name="Kumpf K."/>
            <person name="Tunggal B."/>
            <person name="Cox E.C."/>
            <person name="Quail M.A."/>
            <person name="Platzer M."/>
            <person name="Rosenthal A."/>
            <person name="Noegel A.A."/>
        </authorList>
    </citation>
    <scope>NUCLEOTIDE SEQUENCE [LARGE SCALE GENOMIC DNA]</scope>
    <source>
        <strain>AX4</strain>
    </source>
</reference>
<reference key="2">
    <citation type="journal article" date="2005" name="Nature">
        <title>The genome of the social amoeba Dictyostelium discoideum.</title>
        <authorList>
            <person name="Eichinger L."/>
            <person name="Pachebat J.A."/>
            <person name="Gloeckner G."/>
            <person name="Rajandream M.A."/>
            <person name="Sucgang R."/>
            <person name="Berriman M."/>
            <person name="Song J."/>
            <person name="Olsen R."/>
            <person name="Szafranski K."/>
            <person name="Xu Q."/>
            <person name="Tunggal B."/>
            <person name="Kummerfeld S."/>
            <person name="Madera M."/>
            <person name="Konfortov B.A."/>
            <person name="Rivero F."/>
            <person name="Bankier A.T."/>
            <person name="Lehmann R."/>
            <person name="Hamlin N."/>
            <person name="Davies R."/>
            <person name="Gaudet P."/>
            <person name="Fey P."/>
            <person name="Pilcher K."/>
            <person name="Chen G."/>
            <person name="Saunders D."/>
            <person name="Sodergren E.J."/>
            <person name="Davis P."/>
            <person name="Kerhornou A."/>
            <person name="Nie X."/>
            <person name="Hall N."/>
            <person name="Anjard C."/>
            <person name="Hemphill L."/>
            <person name="Bason N."/>
            <person name="Farbrother P."/>
            <person name="Desany B."/>
            <person name="Just E."/>
            <person name="Morio T."/>
            <person name="Rost R."/>
            <person name="Churcher C.M."/>
            <person name="Cooper J."/>
            <person name="Haydock S."/>
            <person name="van Driessche N."/>
            <person name="Cronin A."/>
            <person name="Goodhead I."/>
            <person name="Muzny D.M."/>
            <person name="Mourier T."/>
            <person name="Pain A."/>
            <person name="Lu M."/>
            <person name="Harper D."/>
            <person name="Lindsay R."/>
            <person name="Hauser H."/>
            <person name="James K.D."/>
            <person name="Quiles M."/>
            <person name="Madan Babu M."/>
            <person name="Saito T."/>
            <person name="Buchrieser C."/>
            <person name="Wardroper A."/>
            <person name="Felder M."/>
            <person name="Thangavelu M."/>
            <person name="Johnson D."/>
            <person name="Knights A."/>
            <person name="Loulseged H."/>
            <person name="Mungall K.L."/>
            <person name="Oliver K."/>
            <person name="Price C."/>
            <person name="Quail M.A."/>
            <person name="Urushihara H."/>
            <person name="Hernandez J."/>
            <person name="Rabbinowitsch E."/>
            <person name="Steffen D."/>
            <person name="Sanders M."/>
            <person name="Ma J."/>
            <person name="Kohara Y."/>
            <person name="Sharp S."/>
            <person name="Simmonds M.N."/>
            <person name="Spiegler S."/>
            <person name="Tivey A."/>
            <person name="Sugano S."/>
            <person name="White B."/>
            <person name="Walker D."/>
            <person name="Woodward J.R."/>
            <person name="Winckler T."/>
            <person name="Tanaka Y."/>
            <person name="Shaulsky G."/>
            <person name="Schleicher M."/>
            <person name="Weinstock G.M."/>
            <person name="Rosenthal A."/>
            <person name="Cox E.C."/>
            <person name="Chisholm R.L."/>
            <person name="Gibbs R.A."/>
            <person name="Loomis W.F."/>
            <person name="Platzer M."/>
            <person name="Kay R.R."/>
            <person name="Williams J.G."/>
            <person name="Dear P.H."/>
            <person name="Noegel A.A."/>
            <person name="Barrell B.G."/>
            <person name="Kuspa A."/>
        </authorList>
    </citation>
    <scope>NUCLEOTIDE SEQUENCE [LARGE SCALE GENOMIC DNA]</scope>
    <source>
        <strain>AX4</strain>
    </source>
</reference>
<sequence>MKDLLSSLSKGIPFEPLPEHPGLDSTVPHAPGRPINLTLNEKKLAIKNSLRYFPNSLHSILANEFLEELNKYGHIYMYRFRPTHYEMKAYPIEEYPAKSRQAASIMLMIMNNLDREVAQFPNELVTYGGNGSVFQNWAQYHLTMKYLSEMTDQQTLTMYSGHPMGLFPSNESSPRVIVTNGMVIPNYSSHKDYERMYAQGVTQYGQMTAGSYCYIGPQGIVHGTTITLLNAGRKYLGVESLIGKVFVSSGLGGMSGAQTKAAYICGAICIVAEVSPAAVKKRHAQNWVMEVYSDLNELFARGSCSKEKKPLSIAYQGNVVTLWEKLVEEKDITVDLGSDQTSLHNPFNGGYYPVQCSFEESNRLMVQEPTKFKEMVQETLRRHTTAINALSARGMKFWDYGNSFLLEASRAKADIIKPGTDGKEFIYPSYVQDIMGDIFSLGFGPFRWVCTSGNPKDLEITDRIAKELIEKLRSQPGVPKNVQQQFNDNHLWISQAGEHKLVVGSQARILYSDCIGRSELAVAFNKAVADGTLSAPVVISRDHHDVSGTDAPWRETSNIKDGSQFCADMAIHNVIGDSFRGATWVAIHNGGGTGFGEAINGGFGLYLCGSKLQEEKARMMLNWDVNNGIARRSWSYNDNAENTIKRAMELDPSLKVTIPNHTSDDLINSLNF</sequence>
<gene>
    <name type="primary">uroc1</name>
    <name type="ORF">DDB_G0277727</name>
</gene>
<keyword id="KW-0369">Histidine metabolism</keyword>
<keyword id="KW-0456">Lyase</keyword>
<keyword id="KW-0520">NAD</keyword>
<keyword id="KW-1185">Reference proteome</keyword>
<accession>Q86AX3</accession>
<accession>B0M0P6</accession>
<organism>
    <name type="scientific">Dictyostelium discoideum</name>
    <name type="common">Social amoeba</name>
    <dbReference type="NCBI Taxonomy" id="44689"/>
    <lineage>
        <taxon>Eukaryota</taxon>
        <taxon>Amoebozoa</taxon>
        <taxon>Evosea</taxon>
        <taxon>Eumycetozoa</taxon>
        <taxon>Dictyostelia</taxon>
        <taxon>Dictyosteliales</taxon>
        <taxon>Dictyosteliaceae</taxon>
        <taxon>Dictyostelium</taxon>
    </lineage>
</organism>
<comment type="catalytic activity">
    <reaction>
        <text>4-imidazolone-5-propanoate = trans-urocanate + H2O</text>
        <dbReference type="Rhea" id="RHEA:13101"/>
        <dbReference type="ChEBI" id="CHEBI:15377"/>
        <dbReference type="ChEBI" id="CHEBI:17771"/>
        <dbReference type="ChEBI" id="CHEBI:77893"/>
        <dbReference type="EC" id="4.2.1.49"/>
    </reaction>
</comment>
<comment type="cofactor">
    <cofactor evidence="1">
        <name>NAD(+)</name>
        <dbReference type="ChEBI" id="CHEBI:57540"/>
    </cofactor>
</comment>
<comment type="pathway">
    <text>Amino-acid degradation; L-histidine degradation into L-glutamate; N-formimidoyl-L-glutamate from L-histidine: step 2/3.</text>
</comment>
<comment type="similarity">
    <text evidence="3">Belongs to the urocanase family.</text>
</comment>
<proteinExistence type="inferred from homology"/>
<feature type="chain" id="PRO_0000328400" description="Probable urocanate hydratase">
    <location>
        <begin position="1"/>
        <end position="672"/>
    </location>
</feature>
<feature type="binding site" evidence="2">
    <location>
        <begin position="128"/>
        <end position="129"/>
    </location>
    <ligand>
        <name>NAD(+)</name>
        <dbReference type="ChEBI" id="CHEBI:57540"/>
    </ligand>
</feature>
<feature type="binding site" evidence="2">
    <location>
        <position position="206"/>
    </location>
    <ligand>
        <name>NAD(+)</name>
        <dbReference type="ChEBI" id="CHEBI:57540"/>
    </ligand>
</feature>
<feature type="binding site" evidence="2">
    <location>
        <begin position="253"/>
        <end position="255"/>
    </location>
    <ligand>
        <name>NAD(+)</name>
        <dbReference type="ChEBI" id="CHEBI:57540"/>
    </ligand>
</feature>
<feature type="binding site" evidence="2">
    <location>
        <position position="273"/>
    </location>
    <ligand>
        <name>NAD(+)</name>
        <dbReference type="ChEBI" id="CHEBI:57540"/>
    </ligand>
</feature>
<feature type="binding site" evidence="2">
    <location>
        <begin position="318"/>
        <end position="319"/>
    </location>
    <ligand>
        <name>NAD(+)</name>
        <dbReference type="ChEBI" id="CHEBI:57540"/>
    </ligand>
</feature>
<feature type="binding site" evidence="2">
    <location>
        <begin position="340"/>
        <end position="344"/>
    </location>
    <ligand>
        <name>NAD(+)</name>
        <dbReference type="ChEBI" id="CHEBI:57540"/>
    </ligand>
</feature>
<feature type="binding site" evidence="2">
    <location>
        <begin position="351"/>
        <end position="352"/>
    </location>
    <ligand>
        <name>NAD(+)</name>
        <dbReference type="ChEBI" id="CHEBI:57540"/>
    </ligand>
</feature>
<feature type="binding site" evidence="2">
    <location>
        <position position="400"/>
    </location>
    <ligand>
        <name>NAD(+)</name>
        <dbReference type="ChEBI" id="CHEBI:57540"/>
    </ligand>
</feature>
<feature type="binding site" evidence="2">
    <location>
        <position position="592"/>
    </location>
    <ligand>
        <name>NAD(+)</name>
        <dbReference type="ChEBI" id="CHEBI:57540"/>
    </ligand>
</feature>